<protein>
    <recommendedName>
        <fullName evidence="8">Transcription elongation factor SPT6 homolog</fullName>
        <shortName evidence="6">AtSPT6</shortName>
    </recommendedName>
</protein>
<sequence length="1647" mass="185034">MARNAISDDEEDHELEDDDGEPVHGDPAEHDENDDEEDDDDVGNEYENDGFIVNDEDEEEEEEEDEERKDSDEERQKKKKKRKKKDEGLDEDDYLLLQDNNVKFKKRQYKRLKKAQREQGNGQGESSDDEFDSRGGTRRSAEDKIKDRLFDDVDVDDPPDDVGDEEDLVVEEDVVGSEDEMADFIVDEDDEHGPPKRGNSKKKKYRQGSDITAMRDANEIFGDVDELLTIRKKGLASNQRMERRLEDEFEPTVLSEKYMTGNDDEIRQLDIPERMQISEESTGSPPVDEISIEEESNWIYAQLASQLRESDGTFDGRGFSVNKDDIAKFLELHHVQKLEIPFIAMYRKEQCRSLLDTGDFDGANQGKKPETKWHKVFWMIHDLDKKWLLLRKRKMALHGYYTKRYEEESRRVYDETRLNLNQYLFESVIKSLKVAETEREVDDVDSKFNLHFPPGEIGVDEGQYKRPKRKSQYSICSKAGLWEVANKFGYSAEQLGLALSLEKLVDELEDAKETPEEMAKNFVCAMFENSLAVLKGARHMAAVEISCEPSVKKYVRGIYMENAVVSTSPTADGNTVIDSFHQFSGIKWLREKPLSKFEGAQWLLIQKGEEEKLLQVTFKLPENYMNRLISDCNEHYLSVGVSKYAQLWNEQRKLILEDALHAFLLPSMEKEARSLLTSRAKSRLLSEYGQALWNKVSAGPYQKKEMDINLDEEAAPRVMACCWGPGKPPNTFVMLDSSGEVLDVLYAGSLTSRSQNVNDQQRKKSDQDRVLKFMMDHQPHVVALGAVNLSCTRLKDDIYEVIFQMVEEKPRDVGHGMDDLSIVYVDESLPRLYENSRISGEQLPQQSGNVRRAVALGRYLQNPLAMVATLCGPGREILSWKLHPLENFLQLDEKYGMVEQVMVDITNQVGIDINLAASHDWFFSPLQFISGLGPRKAASLQRSLVRAGSIFVRKDLIMHGLGKKVFVNAAGFLRIRRSGLAASSSQFIDLLDDTRIHPESYSLAQELAKDIYDEDVRGDSNDDEDAIEMAIEHVRDRPASLRKVVLDEYLASKKRENKKETYSNIIRELSCGFQDWRIPFKEPSPDEEFYMISGETEDTIAEGRIVQASVRRLQNGRAICVLDSGLTGMLMKEDFSDDGRDIVDLADQLKEGDILTCKIKSIQKQRYQVFLICKESEMRNNRHQHNQNVDAYYHEDRNSLQLVKEKARKEKELVRKHFKSRMIVHPRFQNITADQATEYLSDKDFGESIVRPSSRGLNFLTLTLKIYDGVYAHKEIAEGGKENKDITSLQCIGKTLTIGEDTFEDLDEVMDRYVDPLVSHLKTMLNYRKFRKGTKSEVDDLLRIEKGENPSRIVYCFGISHEHPGTFILSYIRSTNPHHEYIGLYPKGFKFRKRMFEDIDRLVAYFQRHIDDPLQESAPSIRSIAAKVPMRSPADHGSSGGSGWGSSQSEGGWKGNSDRSGSGRGGEYRNGGGRDGHPSGAPRPYGGRGRGRGRGRRDDMNSDRQDGNGDWGNNDTGTADGGWGNSGGGGWGSESAGKKTGGGSTGGWGSESGGNKSDGAGSWGSGSGGGGSGGWGNDSGGKKSSEDGGFGSGSGGGGSDWGNESGGKKSSADGGWGSESGGKKSDGEGGWGNEPSSRKSDGGGGGW</sequence>
<keyword id="KW-0025">Alternative splicing</keyword>
<keyword id="KW-0251">Elongation factor</keyword>
<keyword id="KW-0539">Nucleus</keyword>
<keyword id="KW-0648">Protein biosynthesis</keyword>
<keyword id="KW-1185">Reference proteome</keyword>
<keyword id="KW-0677">Repeat</keyword>
<keyword id="KW-0804">Transcription</keyword>
<keyword id="KW-0805">Transcription regulation</keyword>
<dbReference type="EMBL" id="AC004512">
    <property type="protein sequence ID" value="AAC27151.1"/>
    <property type="status" value="ALT_SEQ"/>
    <property type="molecule type" value="Genomic_DNA"/>
</dbReference>
<dbReference type="EMBL" id="CP002684">
    <property type="protein sequence ID" value="AEE34373.1"/>
    <property type="molecule type" value="Genomic_DNA"/>
</dbReference>
<dbReference type="EMBL" id="CP002684">
    <property type="protein sequence ID" value="ANM59396.1"/>
    <property type="molecule type" value="Genomic_DNA"/>
</dbReference>
<dbReference type="EMBL" id="AK229565">
    <property type="protein sequence ID" value="BAF01417.1"/>
    <property type="molecule type" value="mRNA"/>
</dbReference>
<dbReference type="PIR" id="T02367">
    <property type="entry name" value="T02367"/>
</dbReference>
<dbReference type="RefSeq" id="NP_001321759.1">
    <molecule id="A8MS85-1"/>
    <property type="nucleotide sequence ID" value="NM_001334206.1"/>
</dbReference>
<dbReference type="RefSeq" id="NP_176723.3">
    <molecule id="A8MS85-1"/>
    <property type="nucleotide sequence ID" value="NM_105218.5"/>
</dbReference>
<dbReference type="SMR" id="A8MS85"/>
<dbReference type="FunCoup" id="A8MS85">
    <property type="interactions" value="4846"/>
</dbReference>
<dbReference type="STRING" id="3702.A8MS85"/>
<dbReference type="iPTMnet" id="A8MS85"/>
<dbReference type="MetOSite" id="A8MS85"/>
<dbReference type="PaxDb" id="3702-AT1G65440.1"/>
<dbReference type="ProteomicsDB" id="228315">
    <molecule id="A8MS85-1"/>
</dbReference>
<dbReference type="EnsemblPlants" id="AT1G65440.1">
    <molecule id="A8MS85-1"/>
    <property type="protein sequence ID" value="AT1G65440.1"/>
    <property type="gene ID" value="AT1G65440"/>
</dbReference>
<dbReference type="EnsemblPlants" id="AT1G65440.4">
    <molecule id="A8MS85-1"/>
    <property type="protein sequence ID" value="AT1G65440.4"/>
    <property type="gene ID" value="AT1G65440"/>
</dbReference>
<dbReference type="GeneID" id="842855"/>
<dbReference type="Gramene" id="AT1G65440.1">
    <molecule id="A8MS85-1"/>
    <property type="protein sequence ID" value="AT1G65440.1"/>
    <property type="gene ID" value="AT1G65440"/>
</dbReference>
<dbReference type="Gramene" id="AT1G65440.4">
    <molecule id="A8MS85-1"/>
    <property type="protein sequence ID" value="AT1G65440.4"/>
    <property type="gene ID" value="AT1G65440"/>
</dbReference>
<dbReference type="KEGG" id="ath:AT1G65440"/>
<dbReference type="Araport" id="AT1G65440"/>
<dbReference type="TAIR" id="AT1G65440">
    <property type="gene designation" value="GTB1"/>
</dbReference>
<dbReference type="eggNOG" id="KOG1856">
    <property type="taxonomic scope" value="Eukaryota"/>
</dbReference>
<dbReference type="InParanoid" id="A8MS85"/>
<dbReference type="OMA" id="GYFYLCF"/>
<dbReference type="PhylomeDB" id="A8MS85"/>
<dbReference type="CD-CODE" id="4299E36E">
    <property type="entry name" value="Nucleolus"/>
</dbReference>
<dbReference type="PRO" id="PR:A8MS85"/>
<dbReference type="Proteomes" id="UP000006548">
    <property type="component" value="Chromosome 1"/>
</dbReference>
<dbReference type="ExpressionAtlas" id="A8MS85">
    <property type="expression patterns" value="baseline and differential"/>
</dbReference>
<dbReference type="GO" id="GO:0005634">
    <property type="term" value="C:nucleus"/>
    <property type="evidence" value="ECO:0007669"/>
    <property type="project" value="UniProtKB-SubCell"/>
</dbReference>
<dbReference type="GO" id="GO:0009506">
    <property type="term" value="C:plasmodesma"/>
    <property type="evidence" value="ECO:0007005"/>
    <property type="project" value="TAIR"/>
</dbReference>
<dbReference type="GO" id="GO:0003676">
    <property type="term" value="F:nucleic acid binding"/>
    <property type="evidence" value="ECO:0007669"/>
    <property type="project" value="InterPro"/>
</dbReference>
<dbReference type="GO" id="GO:0003746">
    <property type="term" value="F:translation elongation factor activity"/>
    <property type="evidence" value="ECO:0007669"/>
    <property type="project" value="UniProtKB-KW"/>
</dbReference>
<dbReference type="GO" id="GO:0009793">
    <property type="term" value="P:embryo development ending in seed dormancy"/>
    <property type="evidence" value="ECO:0000315"/>
    <property type="project" value="UniProtKB"/>
</dbReference>
<dbReference type="GO" id="GO:0140673">
    <property type="term" value="P:transcription elongation-coupled chromatin remodeling"/>
    <property type="evidence" value="ECO:0007669"/>
    <property type="project" value="InterPro"/>
</dbReference>
<dbReference type="CDD" id="cd09928">
    <property type="entry name" value="SH2_Cterm_SPT6_like"/>
    <property type="match status" value="1"/>
</dbReference>
<dbReference type="CDD" id="cd09918">
    <property type="entry name" value="SH2_Nterm_SPT6_like"/>
    <property type="match status" value="1"/>
</dbReference>
<dbReference type="FunFam" id="1.10.10.2740:FF:000002">
    <property type="entry name" value="Transcription elongation factor Spt6"/>
    <property type="match status" value="1"/>
</dbReference>
<dbReference type="FunFam" id="1.10.10.650:FF:000003">
    <property type="entry name" value="Transcription elongation factor spt6"/>
    <property type="match status" value="1"/>
</dbReference>
<dbReference type="FunFam" id="1.10.150.850:FF:000001">
    <property type="entry name" value="Transcription elongation factor spt6"/>
    <property type="match status" value="1"/>
</dbReference>
<dbReference type="FunFam" id="1.10.3500.10:FF:000004">
    <property type="entry name" value="Transcription elongation factor spt6"/>
    <property type="match status" value="1"/>
</dbReference>
<dbReference type="FunFam" id="2.40.50.140:FF:000256">
    <property type="entry name" value="Transcription elongation factor spt6"/>
    <property type="match status" value="1"/>
</dbReference>
<dbReference type="FunFam" id="3.30.420.140:FF:000006">
    <property type="entry name" value="Transcription elongation factor spt6"/>
    <property type="match status" value="1"/>
</dbReference>
<dbReference type="FunFam" id="3.30.505.10:FF:000047">
    <property type="entry name" value="Transcription elongation factor spt6"/>
    <property type="match status" value="1"/>
</dbReference>
<dbReference type="FunFam" id="3.30.505.10:FF:000050">
    <property type="entry name" value="Transcription elongation factor spt6"/>
    <property type="match status" value="1"/>
</dbReference>
<dbReference type="Gene3D" id="2.40.50.140">
    <property type="entry name" value="Nucleic acid-binding proteins"/>
    <property type="match status" value="1"/>
</dbReference>
<dbReference type="Gene3D" id="1.10.10.650">
    <property type="entry name" value="RuvA domain 2-like"/>
    <property type="match status" value="1"/>
</dbReference>
<dbReference type="Gene3D" id="3.30.505.10">
    <property type="entry name" value="SH2 domain"/>
    <property type="match status" value="2"/>
</dbReference>
<dbReference type="Gene3D" id="1.10.10.2740">
    <property type="entry name" value="Spt6, Death-like domain"/>
    <property type="match status" value="1"/>
</dbReference>
<dbReference type="Gene3D" id="1.10.150.850">
    <property type="entry name" value="Spt6, helix-hairpin-helix domain"/>
    <property type="match status" value="1"/>
</dbReference>
<dbReference type="Gene3D" id="1.10.3500.10">
    <property type="entry name" value="Tex N-terminal region-like"/>
    <property type="match status" value="1"/>
</dbReference>
<dbReference type="Gene3D" id="3.30.420.140">
    <property type="entry name" value="YqgF/RNase H-like domain"/>
    <property type="match status" value="1"/>
</dbReference>
<dbReference type="InterPro" id="IPR041692">
    <property type="entry name" value="HHH_9"/>
</dbReference>
<dbReference type="InterPro" id="IPR012340">
    <property type="entry name" value="NA-bd_OB-fold"/>
</dbReference>
<dbReference type="InterPro" id="IPR012337">
    <property type="entry name" value="RNaseH-like_sf"/>
</dbReference>
<dbReference type="InterPro" id="IPR010994">
    <property type="entry name" value="RuvA_2-like"/>
</dbReference>
<dbReference type="InterPro" id="IPR003029">
    <property type="entry name" value="S1_domain"/>
</dbReference>
<dbReference type="InterPro" id="IPR036860">
    <property type="entry name" value="SH2_dom_sf"/>
</dbReference>
<dbReference type="InterPro" id="IPR049540">
    <property type="entry name" value="Spt6-like_S1"/>
</dbReference>
<dbReference type="InterPro" id="IPR028083">
    <property type="entry name" value="Spt6_acidic_N_dom"/>
</dbReference>
<dbReference type="InterPro" id="IPR042066">
    <property type="entry name" value="Spt6_death-like"/>
</dbReference>
<dbReference type="InterPro" id="IPR032706">
    <property type="entry name" value="Spt6_HHH"/>
</dbReference>
<dbReference type="InterPro" id="IPR035420">
    <property type="entry name" value="Spt6_SH2"/>
</dbReference>
<dbReference type="InterPro" id="IPR035018">
    <property type="entry name" value="Spt6_SH2_C"/>
</dbReference>
<dbReference type="InterPro" id="IPR035019">
    <property type="entry name" value="Spt6_SH2_N"/>
</dbReference>
<dbReference type="InterPro" id="IPR028231">
    <property type="entry name" value="Spt6_YqgF"/>
</dbReference>
<dbReference type="InterPro" id="IPR055179">
    <property type="entry name" value="Tex-like_central_region"/>
</dbReference>
<dbReference type="InterPro" id="IPR023323">
    <property type="entry name" value="Tex-like_dom_sf"/>
</dbReference>
<dbReference type="InterPro" id="IPR023319">
    <property type="entry name" value="Tex-like_HTH_dom_sf"/>
</dbReference>
<dbReference type="InterPro" id="IPR017072">
    <property type="entry name" value="TF_Spt6"/>
</dbReference>
<dbReference type="InterPro" id="IPR006641">
    <property type="entry name" value="YqgF/RNaseH-like_dom"/>
</dbReference>
<dbReference type="InterPro" id="IPR037027">
    <property type="entry name" value="YqgF/RNaseH-like_dom_sf"/>
</dbReference>
<dbReference type="PANTHER" id="PTHR10145">
    <property type="entry name" value="TRANSCRIPTION ELONGATION FACTOR SPT6"/>
    <property type="match status" value="1"/>
</dbReference>
<dbReference type="PANTHER" id="PTHR10145:SF6">
    <property type="entry name" value="TRANSCRIPTION ELONGATION FACTOR SPT6"/>
    <property type="match status" value="1"/>
</dbReference>
<dbReference type="Pfam" id="PF14635">
    <property type="entry name" value="HHH_7"/>
    <property type="match status" value="1"/>
</dbReference>
<dbReference type="Pfam" id="PF17674">
    <property type="entry name" value="HHH_9"/>
    <property type="match status" value="1"/>
</dbReference>
<dbReference type="Pfam" id="PF14633">
    <property type="entry name" value="SH2_2"/>
    <property type="match status" value="1"/>
</dbReference>
<dbReference type="Pfam" id="PF14632">
    <property type="entry name" value="SPT6_acidic"/>
    <property type="match status" value="1"/>
</dbReference>
<dbReference type="Pfam" id="PF21710">
    <property type="entry name" value="Spt6_S1"/>
    <property type="match status" value="1"/>
</dbReference>
<dbReference type="Pfam" id="PF22706">
    <property type="entry name" value="Tex_central_region"/>
    <property type="match status" value="1"/>
</dbReference>
<dbReference type="Pfam" id="PF14639">
    <property type="entry name" value="YqgF"/>
    <property type="match status" value="1"/>
</dbReference>
<dbReference type="PIRSF" id="PIRSF036947">
    <property type="entry name" value="Spt6"/>
    <property type="match status" value="1"/>
</dbReference>
<dbReference type="SMART" id="SM00316">
    <property type="entry name" value="S1"/>
    <property type="match status" value="1"/>
</dbReference>
<dbReference type="SMART" id="SM00732">
    <property type="entry name" value="YqgFc"/>
    <property type="match status" value="1"/>
</dbReference>
<dbReference type="SUPFAM" id="SSF50249">
    <property type="entry name" value="Nucleic acid-binding proteins"/>
    <property type="match status" value="1"/>
</dbReference>
<dbReference type="SUPFAM" id="SSF53098">
    <property type="entry name" value="Ribonuclease H-like"/>
    <property type="match status" value="1"/>
</dbReference>
<dbReference type="SUPFAM" id="SSF47781">
    <property type="entry name" value="RuvA domain 2-like"/>
    <property type="match status" value="2"/>
</dbReference>
<dbReference type="SUPFAM" id="SSF55550">
    <property type="entry name" value="SH2 domain"/>
    <property type="match status" value="2"/>
</dbReference>
<dbReference type="SUPFAM" id="SSF158832">
    <property type="entry name" value="Tex N-terminal region-like"/>
    <property type="match status" value="1"/>
</dbReference>
<dbReference type="PROSITE" id="PS50126">
    <property type="entry name" value="S1"/>
    <property type="match status" value="1"/>
</dbReference>
<comment type="function">
    <text evidence="1">Transcription elongation factor that enhances the transcription elongation by RNA polymerase II (RNAPII) (By similarity). Plays an important role in regulating embryo apical and basal patterning during early embryogenesis, partly through negative regulation of the transcription factors PHABULOSA and PHAVOLUTA.</text>
</comment>
<comment type="subunit">
    <text evidence="4">Interacts (via N-terminus) with IWS1.</text>
</comment>
<comment type="subcellular location">
    <subcellularLocation>
        <location evidence="8">Nucleus</location>
    </subcellularLocation>
</comment>
<comment type="alternative products">
    <event type="alternative splicing"/>
    <isoform>
        <id>A8MS85-1</id>
        <name>1</name>
        <sequence type="displayed"/>
    </isoform>
</comment>
<comment type="tissue specificity">
    <text evidence="5">Expressed in shoot apical meristem, leaf primordia, vasculature of young leaves, inflorescence meristem, floral meristem, young floral organs, developing ovules and anthers.</text>
</comment>
<comment type="developmental stage">
    <text evidence="5">During embryo development, expressed throughout embryos at the globular, heart, torpedo and bent-cotyledon stages.</text>
</comment>
<comment type="disruption phenotype">
    <text evidence="5">Embryonic lethality leading to aborted seed development.</text>
</comment>
<comment type="miscellaneous">
    <molecule>Isoform 1</molecule>
    <text evidence="8">A number of isoforms are produced. According to EST sequences.</text>
</comment>
<comment type="similarity">
    <text evidence="8">Belongs to the SPT6 family.</text>
</comment>
<comment type="sequence caution" evidence="8">
    <conflict type="erroneous gene model prediction">
        <sequence resource="EMBL-CDS" id="AAC27151"/>
    </conflict>
</comment>
<proteinExistence type="evidence at protein level"/>
<accession>A8MS85</accession>
<accession>O80815</accession>
<accession>Q0WN83</accession>
<reference key="1">
    <citation type="journal article" date="2000" name="Nature">
        <title>Sequence and analysis of chromosome 1 of the plant Arabidopsis thaliana.</title>
        <authorList>
            <person name="Theologis A."/>
            <person name="Ecker J.R."/>
            <person name="Palm C.J."/>
            <person name="Federspiel N.A."/>
            <person name="Kaul S."/>
            <person name="White O."/>
            <person name="Alonso J."/>
            <person name="Altafi H."/>
            <person name="Araujo R."/>
            <person name="Bowman C.L."/>
            <person name="Brooks S.Y."/>
            <person name="Buehler E."/>
            <person name="Chan A."/>
            <person name="Chao Q."/>
            <person name="Chen H."/>
            <person name="Cheuk R.F."/>
            <person name="Chin C.W."/>
            <person name="Chung M.K."/>
            <person name="Conn L."/>
            <person name="Conway A.B."/>
            <person name="Conway A.R."/>
            <person name="Creasy T.H."/>
            <person name="Dewar K."/>
            <person name="Dunn P."/>
            <person name="Etgu P."/>
            <person name="Feldblyum T.V."/>
            <person name="Feng J.-D."/>
            <person name="Fong B."/>
            <person name="Fujii C.Y."/>
            <person name="Gill J.E."/>
            <person name="Goldsmith A.D."/>
            <person name="Haas B."/>
            <person name="Hansen N.F."/>
            <person name="Hughes B."/>
            <person name="Huizar L."/>
            <person name="Hunter J.L."/>
            <person name="Jenkins J."/>
            <person name="Johnson-Hopson C."/>
            <person name="Khan S."/>
            <person name="Khaykin E."/>
            <person name="Kim C.J."/>
            <person name="Koo H.L."/>
            <person name="Kremenetskaia I."/>
            <person name="Kurtz D.B."/>
            <person name="Kwan A."/>
            <person name="Lam B."/>
            <person name="Langin-Hooper S."/>
            <person name="Lee A."/>
            <person name="Lee J.M."/>
            <person name="Lenz C.A."/>
            <person name="Li J.H."/>
            <person name="Li Y.-P."/>
            <person name="Lin X."/>
            <person name="Liu S.X."/>
            <person name="Liu Z.A."/>
            <person name="Luros J.S."/>
            <person name="Maiti R."/>
            <person name="Marziali A."/>
            <person name="Militscher J."/>
            <person name="Miranda M."/>
            <person name="Nguyen M."/>
            <person name="Nierman W.C."/>
            <person name="Osborne B.I."/>
            <person name="Pai G."/>
            <person name="Peterson J."/>
            <person name="Pham P.K."/>
            <person name="Rizzo M."/>
            <person name="Rooney T."/>
            <person name="Rowley D."/>
            <person name="Sakano H."/>
            <person name="Salzberg S.L."/>
            <person name="Schwartz J.R."/>
            <person name="Shinn P."/>
            <person name="Southwick A.M."/>
            <person name="Sun H."/>
            <person name="Tallon L.J."/>
            <person name="Tambunga G."/>
            <person name="Toriumi M.J."/>
            <person name="Town C.D."/>
            <person name="Utterback T."/>
            <person name="Van Aken S."/>
            <person name="Vaysberg M."/>
            <person name="Vysotskaia V.S."/>
            <person name="Walker M."/>
            <person name="Wu D."/>
            <person name="Yu G."/>
            <person name="Fraser C.M."/>
            <person name="Venter J.C."/>
            <person name="Davis R.W."/>
        </authorList>
    </citation>
    <scope>NUCLEOTIDE SEQUENCE [LARGE SCALE GENOMIC DNA]</scope>
    <source>
        <strain>cv. Columbia</strain>
    </source>
</reference>
<reference key="2">
    <citation type="journal article" date="2017" name="Plant J.">
        <title>Araport11: a complete reannotation of the Arabidopsis thaliana reference genome.</title>
        <authorList>
            <person name="Cheng C.Y."/>
            <person name="Krishnakumar V."/>
            <person name="Chan A.P."/>
            <person name="Thibaud-Nissen F."/>
            <person name="Schobel S."/>
            <person name="Town C.D."/>
        </authorList>
    </citation>
    <scope>GENOME REANNOTATION</scope>
    <source>
        <strain>cv. Columbia</strain>
    </source>
</reference>
<reference key="3">
    <citation type="submission" date="2006-07" db="EMBL/GenBank/DDBJ databases">
        <title>Large-scale analysis of RIKEN Arabidopsis full-length (RAFL) cDNAs.</title>
        <authorList>
            <person name="Totoki Y."/>
            <person name="Seki M."/>
            <person name="Ishida J."/>
            <person name="Nakajima M."/>
            <person name="Enju A."/>
            <person name="Kamiya A."/>
            <person name="Narusaka M."/>
            <person name="Shin-i T."/>
            <person name="Nakagawa M."/>
            <person name="Sakamoto N."/>
            <person name="Oishi K."/>
            <person name="Kohara Y."/>
            <person name="Kobayashi M."/>
            <person name="Toyoda A."/>
            <person name="Sakaki Y."/>
            <person name="Sakurai T."/>
            <person name="Iida K."/>
            <person name="Akiyama K."/>
            <person name="Satou M."/>
            <person name="Toyoda T."/>
            <person name="Konagaya A."/>
            <person name="Carninci P."/>
            <person name="Kawai J."/>
            <person name="Hayashizaki Y."/>
            <person name="Shinozaki K."/>
        </authorList>
    </citation>
    <scope>NUCLEOTIDE SEQUENCE [LARGE SCALE MRNA] OF 1-327</scope>
    <source>
        <strain>cv. Columbia</strain>
    </source>
</reference>
<reference key="4">
    <citation type="journal article" date="2010" name="Proc. Natl. Acad. Sci. U.S.A.">
        <title>Arabidopsis IWS1 interacts with transcription factor BES1 and is involved in plant steroid hormone brassinosteroid regulated gene expression.</title>
        <authorList>
            <person name="Li L."/>
            <person name="Ye H."/>
            <person name="Guo H."/>
            <person name="Yin Y."/>
        </authorList>
    </citation>
    <scope>INTERACTION WITH IWS1</scope>
</reference>
<reference key="5">
    <citation type="journal article" date="2012" name="Mol. Plant">
        <title>SPT6L encoding a putative WG/GW-repeat protein regulates apical-basal polarity of embryo in Arabidopsis.</title>
        <authorList>
            <person name="Gu X.L."/>
            <person name="Wang H."/>
            <person name="Huang H."/>
            <person name="Cui X.F."/>
        </authorList>
    </citation>
    <scope>FUNCTION</scope>
    <scope>TISSUE SPECIFICITY</scope>
    <scope>DEVELOPMENTAL STAGE</scope>
    <scope>DISRUPTION PHENOTYPE</scope>
</reference>
<name>SPT61_ARATH</name>
<organism>
    <name type="scientific">Arabidopsis thaliana</name>
    <name type="common">Mouse-ear cress</name>
    <dbReference type="NCBI Taxonomy" id="3702"/>
    <lineage>
        <taxon>Eukaryota</taxon>
        <taxon>Viridiplantae</taxon>
        <taxon>Streptophyta</taxon>
        <taxon>Embryophyta</taxon>
        <taxon>Tracheophyta</taxon>
        <taxon>Spermatophyta</taxon>
        <taxon>Magnoliopsida</taxon>
        <taxon>eudicotyledons</taxon>
        <taxon>Gunneridae</taxon>
        <taxon>Pentapetalae</taxon>
        <taxon>rosids</taxon>
        <taxon>malvids</taxon>
        <taxon>Brassicales</taxon>
        <taxon>Brassicaceae</taxon>
        <taxon>Camelineae</taxon>
        <taxon>Arabidopsis</taxon>
    </lineage>
</organism>
<gene>
    <name evidence="6" type="primary">SPT6</name>
    <name evidence="12" type="synonym">GTB1</name>
    <name evidence="7" type="synonym">SPT6L</name>
    <name evidence="10" type="ordered locus">At1g65440</name>
    <name evidence="11" type="ORF">T8F5.22</name>
</gene>
<evidence type="ECO:0000250" key="1">
    <source>
        <dbReference type="UniProtKB" id="Q7KZ85"/>
    </source>
</evidence>
<evidence type="ECO:0000255" key="2">
    <source>
        <dbReference type="PROSITE-ProRule" id="PRU00180"/>
    </source>
</evidence>
<evidence type="ECO:0000256" key="3">
    <source>
        <dbReference type="SAM" id="MobiDB-lite"/>
    </source>
</evidence>
<evidence type="ECO:0000269" key="4">
    <source>
    </source>
</evidence>
<evidence type="ECO:0000269" key="5">
    <source>
    </source>
</evidence>
<evidence type="ECO:0000303" key="6">
    <source>
    </source>
</evidence>
<evidence type="ECO:0000303" key="7">
    <source>
    </source>
</evidence>
<evidence type="ECO:0000305" key="8"/>
<evidence type="ECO:0000305" key="9">
    <source>
    </source>
</evidence>
<evidence type="ECO:0000312" key="10">
    <source>
        <dbReference type="Araport" id="AT1G65440"/>
    </source>
</evidence>
<evidence type="ECO:0000312" key="11">
    <source>
        <dbReference type="EMBL" id="AAC27151.1"/>
    </source>
</evidence>
<evidence type="ECO:0000312" key="12">
    <source>
        <dbReference type="EMBL" id="AEE34373.1"/>
    </source>
</evidence>
<feature type="chain" id="PRO_0000437500" description="Transcription elongation factor SPT6 homolog">
    <location>
        <begin position="1"/>
        <end position="1647"/>
    </location>
</feature>
<feature type="domain" description="S1 motif" evidence="2">
    <location>
        <begin position="1103"/>
        <end position="1174"/>
    </location>
</feature>
<feature type="repeat" description="1" evidence="9">
    <location>
        <begin position="1443"/>
        <end position="1444"/>
    </location>
</feature>
<feature type="repeat" description="2" evidence="9">
    <location>
        <begin position="1452"/>
        <end position="1453"/>
    </location>
</feature>
<feature type="repeat" description="3" evidence="9">
    <location>
        <begin position="1511"/>
        <end position="1512"/>
    </location>
</feature>
<feature type="repeat" description="4" evidence="9">
    <location>
        <begin position="1522"/>
        <end position="1523"/>
    </location>
</feature>
<feature type="repeat" description="5" evidence="9">
    <location>
        <begin position="1530"/>
        <end position="1531"/>
    </location>
</feature>
<feature type="repeat" description="6" evidence="9">
    <location>
        <begin position="1547"/>
        <end position="1548"/>
    </location>
</feature>
<feature type="repeat" description="7" evidence="9">
    <location>
        <begin position="1563"/>
        <end position="1564"/>
    </location>
</feature>
<feature type="repeat" description="8" evidence="9">
    <location>
        <begin position="1574"/>
        <end position="1575"/>
    </location>
</feature>
<feature type="repeat" description="9" evidence="9">
    <location>
        <begin position="1601"/>
        <end position="1602"/>
    </location>
</feature>
<feature type="repeat" description="10" evidence="9">
    <location>
        <begin position="1615"/>
        <end position="1616"/>
    </location>
</feature>
<feature type="repeat" description="11" evidence="9">
    <location>
        <begin position="1630"/>
        <end position="1631"/>
    </location>
</feature>
<feature type="repeat" description="12" evidence="9">
    <location>
        <begin position="1646"/>
        <end position="1647"/>
    </location>
</feature>
<feature type="region of interest" description="Disordered" evidence="3">
    <location>
        <begin position="1"/>
        <end position="209"/>
    </location>
</feature>
<feature type="region of interest" description="Disordered" evidence="3">
    <location>
        <begin position="1429"/>
        <end position="1647"/>
    </location>
</feature>
<feature type="region of interest" description="12 X 2 AA repeats of [WG]-[GW] repeats" evidence="8">
    <location>
        <begin position="1443"/>
        <end position="1647"/>
    </location>
</feature>
<feature type="compositionally biased region" description="Acidic residues" evidence="3">
    <location>
        <begin position="7"/>
        <end position="20"/>
    </location>
</feature>
<feature type="compositionally biased region" description="Basic and acidic residues" evidence="3">
    <location>
        <begin position="21"/>
        <end position="30"/>
    </location>
</feature>
<feature type="compositionally biased region" description="Acidic residues" evidence="3">
    <location>
        <begin position="31"/>
        <end position="67"/>
    </location>
</feature>
<feature type="compositionally biased region" description="Basic residues" evidence="3">
    <location>
        <begin position="103"/>
        <end position="114"/>
    </location>
</feature>
<feature type="compositionally biased region" description="Basic and acidic residues" evidence="3">
    <location>
        <begin position="132"/>
        <end position="151"/>
    </location>
</feature>
<feature type="compositionally biased region" description="Acidic residues" evidence="3">
    <location>
        <begin position="152"/>
        <end position="191"/>
    </location>
</feature>
<feature type="compositionally biased region" description="Gly residues" evidence="3">
    <location>
        <begin position="1462"/>
        <end position="1471"/>
    </location>
</feature>
<feature type="compositionally biased region" description="Basic and acidic residues" evidence="3">
    <location>
        <begin position="1496"/>
        <end position="1507"/>
    </location>
</feature>
<feature type="compositionally biased region" description="Gly residues" evidence="3">
    <location>
        <begin position="1519"/>
        <end position="1532"/>
    </location>
</feature>
<feature type="compositionally biased region" description="Gly residues" evidence="3">
    <location>
        <begin position="1539"/>
        <end position="1552"/>
    </location>
</feature>
<feature type="compositionally biased region" description="Gly residues" evidence="3">
    <location>
        <begin position="1561"/>
        <end position="1579"/>
    </location>
</feature>
<feature type="compositionally biased region" description="Gly residues" evidence="3">
    <location>
        <begin position="1588"/>
        <end position="1600"/>
    </location>
</feature>